<keyword id="KW-0997">Cell inner membrane</keyword>
<keyword id="KW-1003">Cell membrane</keyword>
<keyword id="KW-0169">Cobalamin biosynthesis</keyword>
<keyword id="KW-0460">Magnesium</keyword>
<keyword id="KW-0472">Membrane</keyword>
<keyword id="KW-0808">Transferase</keyword>
<keyword id="KW-0812">Transmembrane</keyword>
<keyword id="KW-1133">Transmembrane helix</keyword>
<sequence length="260" mass="26434">MQRNGLIGDTIRSLGFLSRLPLPQGWFDNTDDSLPRNARAFPLAGGILGLLAGVALLIANAISLPPLAAALIAIGALAAMTGALHEDGLGDTADGFFGASTPDRRLDIMKDSRIGTFAALTLVIWTSVKASLLMAIIARAGAGYALLALIGTEAASRAGMLAFWHALPSARPGGLADSMGQPQWETVVCGCGLGLALLAIGFLPSGGMVALINALVLMTVVLFGFARLCMAKIGGQTGDTLGAAQQIGSLAALIGLVMAL</sequence>
<evidence type="ECO:0000255" key="1">
    <source>
        <dbReference type="HAMAP-Rule" id="MF_00719"/>
    </source>
</evidence>
<protein>
    <recommendedName>
        <fullName evidence="1">Adenosylcobinamide-GDP ribazoletransferase</fullName>
        <ecNumber evidence="1">2.7.8.26</ecNumber>
    </recommendedName>
    <alternativeName>
        <fullName evidence="1">Cobalamin synthase</fullName>
    </alternativeName>
    <alternativeName>
        <fullName evidence="1">Cobalamin-5'-phosphate synthase</fullName>
    </alternativeName>
</protein>
<organism>
    <name type="scientific">Brucella ovis (strain ATCC 25840 / 63/290 / NCTC 10512)</name>
    <dbReference type="NCBI Taxonomy" id="444178"/>
    <lineage>
        <taxon>Bacteria</taxon>
        <taxon>Pseudomonadati</taxon>
        <taxon>Pseudomonadota</taxon>
        <taxon>Alphaproteobacteria</taxon>
        <taxon>Hyphomicrobiales</taxon>
        <taxon>Brucellaceae</taxon>
        <taxon>Brucella/Ochrobactrum group</taxon>
        <taxon>Brucella</taxon>
    </lineage>
</organism>
<accession>A5VQ44</accession>
<name>COBS_BRUO2</name>
<reference key="1">
    <citation type="journal article" date="2009" name="PLoS ONE">
        <title>Genome degradation in Brucella ovis corresponds with narrowing of its host range and tissue tropism.</title>
        <authorList>
            <person name="Tsolis R.M."/>
            <person name="Seshadri R."/>
            <person name="Santos R.L."/>
            <person name="Sangari F.J."/>
            <person name="Lobo J.M."/>
            <person name="de Jong M.F."/>
            <person name="Ren Q."/>
            <person name="Myers G."/>
            <person name="Brinkac L.M."/>
            <person name="Nelson W.C."/>
            <person name="Deboy R.T."/>
            <person name="Angiuoli S."/>
            <person name="Khouri H."/>
            <person name="Dimitrov G."/>
            <person name="Robinson J.R."/>
            <person name="Mulligan S."/>
            <person name="Walker R.L."/>
            <person name="Elzer P.E."/>
            <person name="Hassan K.A."/>
            <person name="Paulsen I.T."/>
        </authorList>
    </citation>
    <scope>NUCLEOTIDE SEQUENCE [LARGE SCALE GENOMIC DNA]</scope>
    <source>
        <strain>ATCC 25840 / 63/290 / NCTC 10512</strain>
    </source>
</reference>
<proteinExistence type="inferred from homology"/>
<comment type="function">
    <text evidence="1">Joins adenosylcobinamide-GDP and alpha-ribazole to generate adenosylcobalamin (Ado-cobalamin). Also synthesizes adenosylcobalamin 5'-phosphate from adenosylcobinamide-GDP and alpha-ribazole 5'-phosphate.</text>
</comment>
<comment type="catalytic activity">
    <reaction evidence="1">
        <text>alpha-ribazole + adenosylcob(III)inamide-GDP = adenosylcob(III)alamin + GMP + H(+)</text>
        <dbReference type="Rhea" id="RHEA:16049"/>
        <dbReference type="ChEBI" id="CHEBI:10329"/>
        <dbReference type="ChEBI" id="CHEBI:15378"/>
        <dbReference type="ChEBI" id="CHEBI:18408"/>
        <dbReference type="ChEBI" id="CHEBI:58115"/>
        <dbReference type="ChEBI" id="CHEBI:60487"/>
        <dbReference type="EC" id="2.7.8.26"/>
    </reaction>
</comment>
<comment type="catalytic activity">
    <reaction evidence="1">
        <text>alpha-ribazole 5'-phosphate + adenosylcob(III)inamide-GDP = adenosylcob(III)alamin 5'-phosphate + GMP + H(+)</text>
        <dbReference type="Rhea" id="RHEA:23560"/>
        <dbReference type="ChEBI" id="CHEBI:15378"/>
        <dbReference type="ChEBI" id="CHEBI:57918"/>
        <dbReference type="ChEBI" id="CHEBI:58115"/>
        <dbReference type="ChEBI" id="CHEBI:60487"/>
        <dbReference type="ChEBI" id="CHEBI:60493"/>
        <dbReference type="EC" id="2.7.8.26"/>
    </reaction>
</comment>
<comment type="cofactor">
    <cofactor evidence="1">
        <name>Mg(2+)</name>
        <dbReference type="ChEBI" id="CHEBI:18420"/>
    </cofactor>
</comment>
<comment type="pathway">
    <text evidence="1">Cofactor biosynthesis; adenosylcobalamin biosynthesis; adenosylcobalamin from cob(II)yrinate a,c-diamide: step 7/7.</text>
</comment>
<comment type="subcellular location">
    <subcellularLocation>
        <location evidence="1">Cell inner membrane</location>
        <topology evidence="1">Multi-pass membrane protein</topology>
    </subcellularLocation>
</comment>
<comment type="similarity">
    <text evidence="1">Belongs to the CobS family.</text>
</comment>
<gene>
    <name evidence="1" type="primary">cobS</name>
    <name type="ordered locus">BOV_0858</name>
</gene>
<feature type="chain" id="PRO_1000045761" description="Adenosylcobinamide-GDP ribazoletransferase">
    <location>
        <begin position="1"/>
        <end position="260"/>
    </location>
</feature>
<feature type="transmembrane region" description="Helical" evidence="1">
    <location>
        <begin position="42"/>
        <end position="62"/>
    </location>
</feature>
<feature type="transmembrane region" description="Helical" evidence="1">
    <location>
        <begin position="64"/>
        <end position="84"/>
    </location>
</feature>
<feature type="transmembrane region" description="Helical" evidence="1">
    <location>
        <begin position="117"/>
        <end position="137"/>
    </location>
</feature>
<feature type="transmembrane region" description="Helical" evidence="1">
    <location>
        <begin position="144"/>
        <end position="164"/>
    </location>
</feature>
<feature type="transmembrane region" description="Helical" evidence="1">
    <location>
        <begin position="192"/>
        <end position="212"/>
    </location>
</feature>
<feature type="transmembrane region" description="Helical" evidence="1">
    <location>
        <begin position="214"/>
        <end position="234"/>
    </location>
</feature>
<feature type="transmembrane region" description="Helical" evidence="1">
    <location>
        <begin position="240"/>
        <end position="260"/>
    </location>
</feature>
<dbReference type="EC" id="2.7.8.26" evidence="1"/>
<dbReference type="EMBL" id="CP000708">
    <property type="protein sequence ID" value="ABQ61254.1"/>
    <property type="molecule type" value="Genomic_DNA"/>
</dbReference>
<dbReference type="RefSeq" id="WP_006012285.1">
    <property type="nucleotide sequence ID" value="NC_009505.1"/>
</dbReference>
<dbReference type="GeneID" id="45124293"/>
<dbReference type="KEGG" id="bov:BOV_0858"/>
<dbReference type="HOGENOM" id="CLU_057426_1_0_5"/>
<dbReference type="PhylomeDB" id="A5VQ44"/>
<dbReference type="UniPathway" id="UPA00148">
    <property type="reaction ID" value="UER00238"/>
</dbReference>
<dbReference type="Proteomes" id="UP000006383">
    <property type="component" value="Chromosome I"/>
</dbReference>
<dbReference type="GO" id="GO:0005886">
    <property type="term" value="C:plasma membrane"/>
    <property type="evidence" value="ECO:0007669"/>
    <property type="project" value="UniProtKB-SubCell"/>
</dbReference>
<dbReference type="GO" id="GO:0051073">
    <property type="term" value="F:adenosylcobinamide-GDP ribazoletransferase activity"/>
    <property type="evidence" value="ECO:0007669"/>
    <property type="project" value="UniProtKB-UniRule"/>
</dbReference>
<dbReference type="GO" id="GO:0008818">
    <property type="term" value="F:cobalamin 5'-phosphate synthase activity"/>
    <property type="evidence" value="ECO:0007669"/>
    <property type="project" value="UniProtKB-UniRule"/>
</dbReference>
<dbReference type="GO" id="GO:0009236">
    <property type="term" value="P:cobalamin biosynthetic process"/>
    <property type="evidence" value="ECO:0007669"/>
    <property type="project" value="UniProtKB-UniRule"/>
</dbReference>
<dbReference type="HAMAP" id="MF_00719">
    <property type="entry name" value="CobS"/>
    <property type="match status" value="1"/>
</dbReference>
<dbReference type="InterPro" id="IPR003805">
    <property type="entry name" value="CobS"/>
</dbReference>
<dbReference type="NCBIfam" id="TIGR00317">
    <property type="entry name" value="cobS"/>
    <property type="match status" value="1"/>
</dbReference>
<dbReference type="NCBIfam" id="NF001276">
    <property type="entry name" value="PRK00235.1-2"/>
    <property type="match status" value="1"/>
</dbReference>
<dbReference type="PANTHER" id="PTHR34148">
    <property type="entry name" value="ADENOSYLCOBINAMIDE-GDP RIBAZOLETRANSFERASE"/>
    <property type="match status" value="1"/>
</dbReference>
<dbReference type="PANTHER" id="PTHR34148:SF1">
    <property type="entry name" value="ADENOSYLCOBINAMIDE-GDP RIBAZOLETRANSFERASE"/>
    <property type="match status" value="1"/>
</dbReference>
<dbReference type="Pfam" id="PF02654">
    <property type="entry name" value="CobS"/>
    <property type="match status" value="1"/>
</dbReference>